<accession>B8ZPK0</accession>
<organism>
    <name type="scientific">Streptococcus pneumoniae (strain ATCC 700669 / Spain 23F-1)</name>
    <dbReference type="NCBI Taxonomy" id="561276"/>
    <lineage>
        <taxon>Bacteria</taxon>
        <taxon>Bacillati</taxon>
        <taxon>Bacillota</taxon>
        <taxon>Bacilli</taxon>
        <taxon>Lactobacillales</taxon>
        <taxon>Streptococcaceae</taxon>
        <taxon>Streptococcus</taxon>
    </lineage>
</organism>
<sequence length="844" mass="94848">MAIEKLSPGMQQYVDIKKQYPDAFLLFRMGDFYELFYEDAVNAAQILEISLTSRNKNADNPIPMAGVPYHSAQQYIDVLIEQGYKVAIAEQMEDPKQAVGVVKREVVQVITPGTVVDSSKPDSQNNFLVSIDREGNQFGLAYMDLVTGDFYVTGLLDFTLVCGEIRNLKAREVVLGYDLSEEEEQILSRQMNLVLSYEKESFEDLHLLDLRLATVEQTASSKLLQYVHRTQMRELNHLKPVIRYEIKDFLQMDYATKASLDLVENARSGKKQGSLFWLLDETKTAMGMRLLRSWIHRPLIDKERIVQRQEVVQVFLDHFFERSDLTDSLKGVYDIERLASRVSFGKTNPKDLLQLATTLSSVPRIRAILEGMEQPTLAYLIAQLDAIPELESLISAAIAPEAPHVITDGGIIRTGFDETLDKYRCVLREGTSWIAEIEAKERENSGISTLKIDYNKKDGYYFHVTNSQLGNVPAHFFRKATLKNSERFGTEELARIEGDMLEAREKSANLEYEIFMRIREEVGKYIQRLQALAQGIATVDVLQSLAVVAETQHLIRPEFGDDSQIDIRKGRHAVVEKVMGAQTYIPNTIQMAEDTSIQLVTGPNMSGKSTYMRQLAMTAVMAQLGSYVPAESAHLPIFDAIFTRIGAADDLVSGQSTFMVEMMEANNAISHATKNSLILFDELGRGTATYDGMALAQSIIEYIHEHIGAKTLFATHYHELTSLESSLQHLVNVHVATLEQDGQVTFLHKIEPGPADKSYGIHVAKIAGLPADLLARADKILTQLENQGTESPPPMRQTSAVTEQISLFDRAEEHPILAELAKLDVYNMTPMQVMNVLVELKQKL</sequence>
<gene>
    <name evidence="1" type="primary">mutS</name>
    <name type="ordered locus">SPN23F21010</name>
</gene>
<comment type="function">
    <text evidence="1">This protein is involved in the repair of mismatches in DNA. It is possible that it carries out the mismatch recognition step. This protein has a weak ATPase activity.</text>
</comment>
<comment type="similarity">
    <text evidence="1">Belongs to the DNA mismatch repair MutS family.</text>
</comment>
<name>MUTS_STRPJ</name>
<keyword id="KW-0067">ATP-binding</keyword>
<keyword id="KW-0227">DNA damage</keyword>
<keyword id="KW-0234">DNA repair</keyword>
<keyword id="KW-0238">DNA-binding</keyword>
<keyword id="KW-0547">Nucleotide-binding</keyword>
<protein>
    <recommendedName>
        <fullName evidence="1">DNA mismatch repair protein MutS</fullName>
    </recommendedName>
</protein>
<reference key="1">
    <citation type="journal article" date="2009" name="J. Bacteriol.">
        <title>Role of conjugative elements in the evolution of the multidrug-resistant pandemic clone Streptococcus pneumoniae Spain23F ST81.</title>
        <authorList>
            <person name="Croucher N.J."/>
            <person name="Walker D."/>
            <person name="Romero P."/>
            <person name="Lennard N."/>
            <person name="Paterson G.K."/>
            <person name="Bason N.C."/>
            <person name="Mitchell A.M."/>
            <person name="Quail M.A."/>
            <person name="Andrew P.W."/>
            <person name="Parkhill J."/>
            <person name="Bentley S.D."/>
            <person name="Mitchell T.J."/>
        </authorList>
    </citation>
    <scope>NUCLEOTIDE SEQUENCE [LARGE SCALE GENOMIC DNA]</scope>
    <source>
        <strain>ATCC 700669 / Spain 23F-1</strain>
    </source>
</reference>
<feature type="chain" id="PRO_1000192205" description="DNA mismatch repair protein MutS">
    <location>
        <begin position="1"/>
        <end position="844"/>
    </location>
</feature>
<feature type="binding site" evidence="1">
    <location>
        <begin position="602"/>
        <end position="609"/>
    </location>
    <ligand>
        <name>ATP</name>
        <dbReference type="ChEBI" id="CHEBI:30616"/>
    </ligand>
</feature>
<dbReference type="EMBL" id="FM211187">
    <property type="protein sequence ID" value="CAR69841.1"/>
    <property type="molecule type" value="Genomic_DNA"/>
</dbReference>
<dbReference type="RefSeq" id="WP_000963680.1">
    <property type="nucleotide sequence ID" value="NC_011900.1"/>
</dbReference>
<dbReference type="SMR" id="B8ZPK0"/>
<dbReference type="KEGG" id="sne:SPN23F21010"/>
<dbReference type="HOGENOM" id="CLU_002472_3_1_9"/>
<dbReference type="GO" id="GO:0005829">
    <property type="term" value="C:cytosol"/>
    <property type="evidence" value="ECO:0007669"/>
    <property type="project" value="TreeGrafter"/>
</dbReference>
<dbReference type="GO" id="GO:0005524">
    <property type="term" value="F:ATP binding"/>
    <property type="evidence" value="ECO:0007669"/>
    <property type="project" value="UniProtKB-UniRule"/>
</dbReference>
<dbReference type="GO" id="GO:0140664">
    <property type="term" value="F:ATP-dependent DNA damage sensor activity"/>
    <property type="evidence" value="ECO:0007669"/>
    <property type="project" value="InterPro"/>
</dbReference>
<dbReference type="GO" id="GO:0003684">
    <property type="term" value="F:damaged DNA binding"/>
    <property type="evidence" value="ECO:0007669"/>
    <property type="project" value="UniProtKB-UniRule"/>
</dbReference>
<dbReference type="GO" id="GO:0030983">
    <property type="term" value="F:mismatched DNA binding"/>
    <property type="evidence" value="ECO:0007669"/>
    <property type="project" value="InterPro"/>
</dbReference>
<dbReference type="GO" id="GO:0006298">
    <property type="term" value="P:mismatch repair"/>
    <property type="evidence" value="ECO:0007669"/>
    <property type="project" value="UniProtKB-UniRule"/>
</dbReference>
<dbReference type="CDD" id="cd03284">
    <property type="entry name" value="ABC_MutS1"/>
    <property type="match status" value="1"/>
</dbReference>
<dbReference type="FunFam" id="1.10.1420.10:FF:000018">
    <property type="entry name" value="DNA mismatch repair protein MutS"/>
    <property type="match status" value="1"/>
</dbReference>
<dbReference type="FunFam" id="3.30.420.110:FF:000015">
    <property type="entry name" value="DNA mismatch repair protein MutS"/>
    <property type="match status" value="1"/>
</dbReference>
<dbReference type="FunFam" id="3.40.1170.10:FF:000001">
    <property type="entry name" value="DNA mismatch repair protein MutS"/>
    <property type="match status" value="1"/>
</dbReference>
<dbReference type="FunFam" id="3.40.50.300:FF:000896">
    <property type="entry name" value="DNA mismatch repair protein MutS"/>
    <property type="match status" value="1"/>
</dbReference>
<dbReference type="Gene3D" id="1.10.1420.10">
    <property type="match status" value="2"/>
</dbReference>
<dbReference type="Gene3D" id="3.40.1170.10">
    <property type="entry name" value="DNA repair protein MutS, domain I"/>
    <property type="match status" value="1"/>
</dbReference>
<dbReference type="Gene3D" id="3.30.420.110">
    <property type="entry name" value="MutS, connector domain"/>
    <property type="match status" value="1"/>
</dbReference>
<dbReference type="Gene3D" id="3.40.50.300">
    <property type="entry name" value="P-loop containing nucleotide triphosphate hydrolases"/>
    <property type="match status" value="1"/>
</dbReference>
<dbReference type="HAMAP" id="MF_00096">
    <property type="entry name" value="MutS"/>
    <property type="match status" value="1"/>
</dbReference>
<dbReference type="InterPro" id="IPR005748">
    <property type="entry name" value="DNA_mismatch_repair_MutS"/>
</dbReference>
<dbReference type="InterPro" id="IPR007695">
    <property type="entry name" value="DNA_mismatch_repair_MutS-lik_N"/>
</dbReference>
<dbReference type="InterPro" id="IPR017261">
    <property type="entry name" value="DNA_mismatch_repair_MutS/MSH"/>
</dbReference>
<dbReference type="InterPro" id="IPR000432">
    <property type="entry name" value="DNA_mismatch_repair_MutS_C"/>
</dbReference>
<dbReference type="InterPro" id="IPR007861">
    <property type="entry name" value="DNA_mismatch_repair_MutS_clamp"/>
</dbReference>
<dbReference type="InterPro" id="IPR007696">
    <property type="entry name" value="DNA_mismatch_repair_MutS_core"/>
</dbReference>
<dbReference type="InterPro" id="IPR016151">
    <property type="entry name" value="DNA_mismatch_repair_MutS_N"/>
</dbReference>
<dbReference type="InterPro" id="IPR036187">
    <property type="entry name" value="DNA_mismatch_repair_MutS_sf"/>
</dbReference>
<dbReference type="InterPro" id="IPR007860">
    <property type="entry name" value="DNA_mmatch_repair_MutS_con_dom"/>
</dbReference>
<dbReference type="InterPro" id="IPR045076">
    <property type="entry name" value="MutS"/>
</dbReference>
<dbReference type="InterPro" id="IPR036678">
    <property type="entry name" value="MutS_con_dom_sf"/>
</dbReference>
<dbReference type="InterPro" id="IPR027417">
    <property type="entry name" value="P-loop_NTPase"/>
</dbReference>
<dbReference type="NCBIfam" id="TIGR01070">
    <property type="entry name" value="mutS1"/>
    <property type="match status" value="1"/>
</dbReference>
<dbReference type="NCBIfam" id="NF003810">
    <property type="entry name" value="PRK05399.1"/>
    <property type="match status" value="1"/>
</dbReference>
<dbReference type="PANTHER" id="PTHR11361:SF34">
    <property type="entry name" value="DNA MISMATCH REPAIR PROTEIN MSH1, MITOCHONDRIAL"/>
    <property type="match status" value="1"/>
</dbReference>
<dbReference type="PANTHER" id="PTHR11361">
    <property type="entry name" value="DNA MISMATCH REPAIR PROTEIN MUTS FAMILY MEMBER"/>
    <property type="match status" value="1"/>
</dbReference>
<dbReference type="Pfam" id="PF01624">
    <property type="entry name" value="MutS_I"/>
    <property type="match status" value="1"/>
</dbReference>
<dbReference type="Pfam" id="PF05188">
    <property type="entry name" value="MutS_II"/>
    <property type="match status" value="1"/>
</dbReference>
<dbReference type="Pfam" id="PF05192">
    <property type="entry name" value="MutS_III"/>
    <property type="match status" value="1"/>
</dbReference>
<dbReference type="Pfam" id="PF05190">
    <property type="entry name" value="MutS_IV"/>
    <property type="match status" value="1"/>
</dbReference>
<dbReference type="Pfam" id="PF00488">
    <property type="entry name" value="MutS_V"/>
    <property type="match status" value="1"/>
</dbReference>
<dbReference type="PIRSF" id="PIRSF037677">
    <property type="entry name" value="DNA_mis_repair_Msh6"/>
    <property type="match status" value="1"/>
</dbReference>
<dbReference type="SMART" id="SM00534">
    <property type="entry name" value="MUTSac"/>
    <property type="match status" value="1"/>
</dbReference>
<dbReference type="SMART" id="SM00533">
    <property type="entry name" value="MUTSd"/>
    <property type="match status" value="1"/>
</dbReference>
<dbReference type="SUPFAM" id="SSF55271">
    <property type="entry name" value="DNA repair protein MutS, domain I"/>
    <property type="match status" value="1"/>
</dbReference>
<dbReference type="SUPFAM" id="SSF53150">
    <property type="entry name" value="DNA repair protein MutS, domain II"/>
    <property type="match status" value="1"/>
</dbReference>
<dbReference type="SUPFAM" id="SSF48334">
    <property type="entry name" value="DNA repair protein MutS, domain III"/>
    <property type="match status" value="1"/>
</dbReference>
<dbReference type="SUPFAM" id="SSF52540">
    <property type="entry name" value="P-loop containing nucleoside triphosphate hydrolases"/>
    <property type="match status" value="1"/>
</dbReference>
<dbReference type="PROSITE" id="PS00486">
    <property type="entry name" value="DNA_MISMATCH_REPAIR_2"/>
    <property type="match status" value="1"/>
</dbReference>
<evidence type="ECO:0000255" key="1">
    <source>
        <dbReference type="HAMAP-Rule" id="MF_00096"/>
    </source>
</evidence>
<proteinExistence type="inferred from homology"/>